<protein>
    <recommendedName>
        <fullName evidence="1">3-hydroxyacyl-[acyl-carrier-protein] dehydratase FabZ</fullName>
        <ecNumber evidence="1">4.2.1.59</ecNumber>
    </recommendedName>
    <alternativeName>
        <fullName evidence="1">(3R)-hydroxymyristoyl-[acyl-carrier-protein] dehydratase</fullName>
        <shortName evidence="1">(3R)-hydroxymyristoyl-ACP dehydrase</shortName>
    </alternativeName>
    <alternativeName>
        <fullName evidence="1">Beta-hydroxyacyl-ACP dehydratase</fullName>
    </alternativeName>
</protein>
<sequence>MIIDITEIMDLIPHRYPFLLVDRVLEIDLNKSIKGIKNVTVNEPQFTGHFPARPVMPGVLMVEAMAQLAAILVAKSLGSTKNKEVFLMAIENAKFRRIVQPGDTMYIHATIDQQRANVWKFSSTVTVEGEMAAESKFTAMIKDKS</sequence>
<proteinExistence type="inferred from homology"/>
<comment type="function">
    <text evidence="1">Involved in unsaturated fatty acids biosynthesis. Catalyzes the dehydration of short chain beta-hydroxyacyl-ACPs and long chain saturated and unsaturated beta-hydroxyacyl-ACPs.</text>
</comment>
<comment type="catalytic activity">
    <reaction evidence="1">
        <text>a (3R)-hydroxyacyl-[ACP] = a (2E)-enoyl-[ACP] + H2O</text>
        <dbReference type="Rhea" id="RHEA:13097"/>
        <dbReference type="Rhea" id="RHEA-COMP:9925"/>
        <dbReference type="Rhea" id="RHEA-COMP:9945"/>
        <dbReference type="ChEBI" id="CHEBI:15377"/>
        <dbReference type="ChEBI" id="CHEBI:78784"/>
        <dbReference type="ChEBI" id="CHEBI:78827"/>
        <dbReference type="EC" id="4.2.1.59"/>
    </reaction>
</comment>
<comment type="subcellular location">
    <subcellularLocation>
        <location evidence="1">Cytoplasm</location>
    </subcellularLocation>
</comment>
<comment type="similarity">
    <text evidence="1">Belongs to the thioester dehydratase family. FabZ subfamily.</text>
</comment>
<dbReference type="EC" id="4.2.1.59" evidence="1"/>
<dbReference type="EMBL" id="CP000053">
    <property type="protein sequence ID" value="AAY60858.1"/>
    <property type="molecule type" value="Genomic_DNA"/>
</dbReference>
<dbReference type="SMR" id="Q4UNK0"/>
<dbReference type="STRING" id="315456.RF_0007"/>
<dbReference type="KEGG" id="rfe:RF_0007"/>
<dbReference type="eggNOG" id="COG0764">
    <property type="taxonomic scope" value="Bacteria"/>
</dbReference>
<dbReference type="HOGENOM" id="CLU_078912_1_2_5"/>
<dbReference type="OrthoDB" id="9772788at2"/>
<dbReference type="Proteomes" id="UP000008548">
    <property type="component" value="Chromosome"/>
</dbReference>
<dbReference type="GO" id="GO:0005737">
    <property type="term" value="C:cytoplasm"/>
    <property type="evidence" value="ECO:0007669"/>
    <property type="project" value="UniProtKB-SubCell"/>
</dbReference>
<dbReference type="GO" id="GO:0016020">
    <property type="term" value="C:membrane"/>
    <property type="evidence" value="ECO:0007669"/>
    <property type="project" value="GOC"/>
</dbReference>
<dbReference type="GO" id="GO:0019171">
    <property type="term" value="F:(3R)-hydroxyacyl-[acyl-carrier-protein] dehydratase activity"/>
    <property type="evidence" value="ECO:0007669"/>
    <property type="project" value="UniProtKB-EC"/>
</dbReference>
<dbReference type="GO" id="GO:0006633">
    <property type="term" value="P:fatty acid biosynthetic process"/>
    <property type="evidence" value="ECO:0007669"/>
    <property type="project" value="UniProtKB-UniRule"/>
</dbReference>
<dbReference type="GO" id="GO:0009245">
    <property type="term" value="P:lipid A biosynthetic process"/>
    <property type="evidence" value="ECO:0007669"/>
    <property type="project" value="UniProtKB-UniRule"/>
</dbReference>
<dbReference type="CDD" id="cd01288">
    <property type="entry name" value="FabZ"/>
    <property type="match status" value="1"/>
</dbReference>
<dbReference type="FunFam" id="3.10.129.10:FF:000001">
    <property type="entry name" value="3-hydroxyacyl-[acyl-carrier-protein] dehydratase FabZ"/>
    <property type="match status" value="1"/>
</dbReference>
<dbReference type="Gene3D" id="3.10.129.10">
    <property type="entry name" value="Hotdog Thioesterase"/>
    <property type="match status" value="1"/>
</dbReference>
<dbReference type="HAMAP" id="MF_00406">
    <property type="entry name" value="FabZ"/>
    <property type="match status" value="1"/>
</dbReference>
<dbReference type="InterPro" id="IPR013114">
    <property type="entry name" value="FabA_FabZ"/>
</dbReference>
<dbReference type="InterPro" id="IPR010084">
    <property type="entry name" value="FabZ"/>
</dbReference>
<dbReference type="InterPro" id="IPR029069">
    <property type="entry name" value="HotDog_dom_sf"/>
</dbReference>
<dbReference type="NCBIfam" id="TIGR01750">
    <property type="entry name" value="fabZ"/>
    <property type="match status" value="1"/>
</dbReference>
<dbReference type="NCBIfam" id="NF000582">
    <property type="entry name" value="PRK00006.1"/>
    <property type="match status" value="1"/>
</dbReference>
<dbReference type="PANTHER" id="PTHR30272">
    <property type="entry name" value="3-HYDROXYACYL-[ACYL-CARRIER-PROTEIN] DEHYDRATASE"/>
    <property type="match status" value="1"/>
</dbReference>
<dbReference type="PANTHER" id="PTHR30272:SF1">
    <property type="entry name" value="3-HYDROXYACYL-[ACYL-CARRIER-PROTEIN] DEHYDRATASE"/>
    <property type="match status" value="1"/>
</dbReference>
<dbReference type="Pfam" id="PF07977">
    <property type="entry name" value="FabA"/>
    <property type="match status" value="1"/>
</dbReference>
<dbReference type="SUPFAM" id="SSF54637">
    <property type="entry name" value="Thioesterase/thiol ester dehydrase-isomerase"/>
    <property type="match status" value="1"/>
</dbReference>
<feature type="chain" id="PRO_0000230833" description="3-hydroxyacyl-[acyl-carrier-protein] dehydratase FabZ">
    <location>
        <begin position="1"/>
        <end position="145"/>
    </location>
</feature>
<feature type="active site" evidence="1">
    <location>
        <position position="49"/>
    </location>
</feature>
<reference key="1">
    <citation type="journal article" date="2005" name="PLoS Biol.">
        <title>The genome sequence of Rickettsia felis identifies the first putative conjugative plasmid in an obligate intracellular parasite.</title>
        <authorList>
            <person name="Ogata H."/>
            <person name="Renesto P."/>
            <person name="Audic S."/>
            <person name="Robert C."/>
            <person name="Blanc G."/>
            <person name="Fournier P.-E."/>
            <person name="Parinello H."/>
            <person name="Claverie J.-M."/>
            <person name="Raoult D."/>
        </authorList>
    </citation>
    <scope>NUCLEOTIDE SEQUENCE [LARGE SCALE GENOMIC DNA]</scope>
    <source>
        <strain>ATCC VR-1525 / URRWXCal2</strain>
    </source>
</reference>
<gene>
    <name evidence="1" type="primary">fabZ</name>
    <name type="ordered locus">RF_0007</name>
</gene>
<evidence type="ECO:0000255" key="1">
    <source>
        <dbReference type="HAMAP-Rule" id="MF_00406"/>
    </source>
</evidence>
<keyword id="KW-0963">Cytoplasm</keyword>
<keyword id="KW-0441">Lipid A biosynthesis</keyword>
<keyword id="KW-0444">Lipid biosynthesis</keyword>
<keyword id="KW-0443">Lipid metabolism</keyword>
<keyword id="KW-0456">Lyase</keyword>
<accession>Q4UNK0</accession>
<organism>
    <name type="scientific">Rickettsia felis (strain ATCC VR-1525 / URRWXCal2)</name>
    <name type="common">Rickettsia azadi</name>
    <dbReference type="NCBI Taxonomy" id="315456"/>
    <lineage>
        <taxon>Bacteria</taxon>
        <taxon>Pseudomonadati</taxon>
        <taxon>Pseudomonadota</taxon>
        <taxon>Alphaproteobacteria</taxon>
        <taxon>Rickettsiales</taxon>
        <taxon>Rickettsiaceae</taxon>
        <taxon>Rickettsieae</taxon>
        <taxon>Rickettsia</taxon>
        <taxon>spotted fever group</taxon>
    </lineage>
</organism>
<name>FABZ_RICFE</name>